<comment type="function">
    <molecule>CLE18 C-terminus</molecule>
    <text evidence="8">Root growth factor that regulates the pattern of root growth and lateral root development by modulating the length and the number of cortical cells in the root apical meristem (RAM), and the anticlinal asymmetric cell divisions in lateral root initiation cells.</text>
</comment>
<comment type="function">
    <molecule>CLE18p</molecule>
    <text evidence="6 7 8 9">Extracellular signal peptide that regulates cell fate (PubMed:16489133). Represses root apical meristem maintenance (PubMed:16902140). Root growth factor that regulates the pattern of root growth and lateral root development (PubMed:22307643). Regulates the transition of protophloem cells from proliferation to differentiation, thus impinging on postembryonic growth capacity of the root meristem; this signaling pathway requires CRN and CLV2 (PubMed:28607033).</text>
</comment>
<comment type="subcellular location">
    <molecule>CLE18p</molecule>
    <subcellularLocation>
        <location evidence="1">Secreted</location>
        <location evidence="1">Extracellular space</location>
    </subcellularLocation>
</comment>
<comment type="subcellular location">
    <molecule>CLE18 C-terminus</molecule>
    <subcellularLocation>
        <location evidence="2">Secreted</location>
    </subcellularLocation>
</comment>
<comment type="tissue specificity">
    <molecule>CLE18p</molecule>
    <text evidence="5">Expressed in roots, leaves, siliques and seedlings.</text>
</comment>
<comment type="PTM">
    <molecule>CLE18 C-terminus</molecule>
    <text evidence="2">The tyrosine sulfation is critical for the function of the peptide.</text>
</comment>
<comment type="PTM">
    <molecule>CLE18p</molecule>
    <text evidence="1">The O-glycosylation (arabinosylation) of the hydroxyproline Pro-43 enhances binding affinity of the CLE18p peptide for its receptor.</text>
</comment>
<comment type="similarity">
    <text evidence="12">Belongs to the CLV3/ESR signal peptide family.</text>
</comment>
<sequence>MHLLKGGVVLIITLILFLITSSIVAIREDPSLIGVDRQIPTGPDPLHNPPQPSPKHHHWIGVEENNIDRSWNYVDYESHHAHSPIHNSPEPAPLYRHLIGV</sequence>
<name>CLE18_ARATH</name>
<keyword id="KW-0217">Developmental protein</keyword>
<keyword id="KW-0221">Differentiation</keyword>
<keyword id="KW-0325">Glycoprotein</keyword>
<keyword id="KW-0379">Hydroxylation</keyword>
<keyword id="KW-1185">Reference proteome</keyword>
<keyword id="KW-0964">Secreted</keyword>
<keyword id="KW-0732">Signal</keyword>
<keyword id="KW-0765">Sulfation</keyword>
<gene>
    <name evidence="10" type="primary">CLE18</name>
    <name evidence="13" type="ordered locus">At1g66145</name>
    <name evidence="14" type="ORF">F15E12</name>
</gene>
<dbReference type="EMBL" id="AC026480">
    <property type="status" value="NOT_ANNOTATED_CDS"/>
    <property type="molecule type" value="Genomic_DNA"/>
</dbReference>
<dbReference type="EMBL" id="CP002684">
    <property type="protein sequence ID" value="AEE34467.1"/>
    <property type="molecule type" value="Genomic_DNA"/>
</dbReference>
<dbReference type="RefSeq" id="NP_683472.1">
    <property type="nucleotide sequence ID" value="NM_148631.1"/>
</dbReference>
<dbReference type="STRING" id="3702.Q3ECH9"/>
<dbReference type="GlyCosmos" id="Q3ECH9">
    <property type="glycosylation" value="1 site, No reported glycans"/>
</dbReference>
<dbReference type="PaxDb" id="3702-AT1G66145.1"/>
<dbReference type="EnsemblPlants" id="AT1G66145.1">
    <property type="protein sequence ID" value="AT1G66145.1"/>
    <property type="gene ID" value="AT1G66145"/>
</dbReference>
<dbReference type="GeneID" id="842929"/>
<dbReference type="Gramene" id="AT1G66145.1">
    <property type="protein sequence ID" value="AT1G66145.1"/>
    <property type="gene ID" value="AT1G66145"/>
</dbReference>
<dbReference type="KEGG" id="ath:AT1G66145"/>
<dbReference type="Araport" id="AT1G66145"/>
<dbReference type="TAIR" id="AT1G66145">
    <property type="gene designation" value="CLE18"/>
</dbReference>
<dbReference type="HOGENOM" id="CLU_2295554_0_0_1"/>
<dbReference type="InParanoid" id="Q3ECH9"/>
<dbReference type="OMA" id="HWIGVEE"/>
<dbReference type="PRO" id="PR:Q3ECH9"/>
<dbReference type="Proteomes" id="UP000006548">
    <property type="component" value="Chromosome 1"/>
</dbReference>
<dbReference type="ExpressionAtlas" id="Q3ECH9">
    <property type="expression patterns" value="baseline"/>
</dbReference>
<dbReference type="GO" id="GO:0048046">
    <property type="term" value="C:apoplast"/>
    <property type="evidence" value="ECO:0000250"/>
    <property type="project" value="UniProtKB"/>
</dbReference>
<dbReference type="GO" id="GO:0033612">
    <property type="term" value="F:receptor serine/threonine kinase binding"/>
    <property type="evidence" value="ECO:0000353"/>
    <property type="project" value="UniProtKB"/>
</dbReference>
<dbReference type="GO" id="GO:0045168">
    <property type="term" value="P:cell-cell signaling involved in cell fate commitment"/>
    <property type="evidence" value="ECO:0000250"/>
    <property type="project" value="UniProtKB"/>
</dbReference>
<dbReference type="GO" id="GO:0010078">
    <property type="term" value="P:maintenance of root meristem identity"/>
    <property type="evidence" value="ECO:0000314"/>
    <property type="project" value="UniProtKB"/>
</dbReference>
<dbReference type="GO" id="GO:0010088">
    <property type="term" value="P:phloem development"/>
    <property type="evidence" value="ECO:0000314"/>
    <property type="project" value="UniProtKB"/>
</dbReference>
<dbReference type="GO" id="GO:0009786">
    <property type="term" value="P:regulation of asymmetric cell division"/>
    <property type="evidence" value="ECO:0000250"/>
    <property type="project" value="UniProtKB"/>
</dbReference>
<dbReference type="GO" id="GO:0045595">
    <property type="term" value="P:regulation of cell differentiation"/>
    <property type="evidence" value="ECO:0000314"/>
    <property type="project" value="UniProtKB"/>
</dbReference>
<dbReference type="GO" id="GO:2000023">
    <property type="term" value="P:regulation of lateral root development"/>
    <property type="evidence" value="ECO:0000314"/>
    <property type="project" value="UniProtKB"/>
</dbReference>
<dbReference type="GO" id="GO:0010082">
    <property type="term" value="P:regulation of root meristem growth"/>
    <property type="evidence" value="ECO:0000314"/>
    <property type="project" value="UniProtKB"/>
</dbReference>
<dbReference type="GO" id="GO:2000067">
    <property type="term" value="P:regulation of root morphogenesis"/>
    <property type="evidence" value="ECO:0000314"/>
    <property type="project" value="UniProtKB"/>
</dbReference>
<accession>Q3ECH9</accession>
<proteinExistence type="evidence at transcript level"/>
<protein>
    <recommendedName>
        <fullName evidence="10">CLAVATA3/ESR (CLE)-related protein 18</fullName>
    </recommendedName>
    <component>
        <recommendedName>
            <fullName evidence="10">CLE18p</fullName>
        </recommendedName>
    </component>
    <component>
        <recommendedName>
            <fullName evidence="11">CLE18 C-terminus</fullName>
        </recommendedName>
    </component>
</protein>
<evidence type="ECO:0000250" key="1">
    <source>
        <dbReference type="UniProtKB" id="O49519"/>
    </source>
</evidence>
<evidence type="ECO:0000250" key="2">
    <source>
        <dbReference type="UniProtKB" id="Q3E880"/>
    </source>
</evidence>
<evidence type="ECO:0000255" key="3"/>
<evidence type="ECO:0000256" key="4">
    <source>
        <dbReference type="SAM" id="MobiDB-lite"/>
    </source>
</evidence>
<evidence type="ECO:0000269" key="5">
    <source>
    </source>
</evidence>
<evidence type="ECO:0000269" key="6">
    <source>
    </source>
</evidence>
<evidence type="ECO:0000269" key="7">
    <source>
    </source>
</evidence>
<evidence type="ECO:0000269" key="8">
    <source>
    </source>
</evidence>
<evidence type="ECO:0000269" key="9">
    <source>
    </source>
</evidence>
<evidence type="ECO:0000303" key="10">
    <source>
    </source>
</evidence>
<evidence type="ECO:0000303" key="11">
    <source>
    </source>
</evidence>
<evidence type="ECO:0000305" key="12"/>
<evidence type="ECO:0000312" key="13">
    <source>
        <dbReference type="Araport" id="AT1G66145"/>
    </source>
</evidence>
<evidence type="ECO:0000312" key="14">
    <source>
        <dbReference type="EMBL" id="AC026480"/>
    </source>
</evidence>
<organism>
    <name type="scientific">Arabidopsis thaliana</name>
    <name type="common">Mouse-ear cress</name>
    <dbReference type="NCBI Taxonomy" id="3702"/>
    <lineage>
        <taxon>Eukaryota</taxon>
        <taxon>Viridiplantae</taxon>
        <taxon>Streptophyta</taxon>
        <taxon>Embryophyta</taxon>
        <taxon>Tracheophyta</taxon>
        <taxon>Spermatophyta</taxon>
        <taxon>Magnoliopsida</taxon>
        <taxon>eudicotyledons</taxon>
        <taxon>Gunneridae</taxon>
        <taxon>Pentapetalae</taxon>
        <taxon>rosids</taxon>
        <taxon>malvids</taxon>
        <taxon>Brassicales</taxon>
        <taxon>Brassicaceae</taxon>
        <taxon>Camelineae</taxon>
        <taxon>Arabidopsis</taxon>
    </lineage>
</organism>
<feature type="signal peptide" evidence="3">
    <location>
        <begin position="1"/>
        <end position="25"/>
    </location>
</feature>
<feature type="chain" id="PRO_0000401265" description="CLAVATA3/ESR (CLE)-related protein 18">
    <location>
        <begin position="26"/>
        <end position="101"/>
    </location>
</feature>
<feature type="peptide" id="PRO_0000401266" description="CLE18p" evidence="1">
    <location>
        <begin position="37"/>
        <end position="48"/>
    </location>
</feature>
<feature type="peptide" id="PRO_0000451984" description="CLE18 C-terminus" evidence="8">
    <location>
        <begin position="75"/>
        <end position="87"/>
    </location>
</feature>
<feature type="region of interest" description="Disordered" evidence="4">
    <location>
        <begin position="37"/>
        <end position="58"/>
    </location>
</feature>
<feature type="compositionally biased region" description="Pro residues" evidence="4">
    <location>
        <begin position="42"/>
        <end position="53"/>
    </location>
</feature>
<feature type="modified residue" description="Hydroxyproline" evidence="1">
    <location>
        <position position="40"/>
    </location>
</feature>
<feature type="modified residue" description="Hydroxyproline" evidence="1">
    <location>
        <position position="43"/>
    </location>
</feature>
<feature type="modified residue" description="Sulfotyrosine" evidence="2">
    <location>
        <position position="76"/>
    </location>
</feature>
<feature type="modified residue" description="Hydroxyproline" evidence="1">
    <location>
        <position position="84"/>
    </location>
</feature>
<feature type="glycosylation site" description="O-linked (Ara...) hydroxyproline" evidence="1">
    <location>
        <position position="43"/>
    </location>
</feature>
<reference key="1">
    <citation type="journal article" date="2000" name="Nature">
        <title>Sequence and analysis of chromosome 1 of the plant Arabidopsis thaliana.</title>
        <authorList>
            <person name="Theologis A."/>
            <person name="Ecker J.R."/>
            <person name="Palm C.J."/>
            <person name="Federspiel N.A."/>
            <person name="Kaul S."/>
            <person name="White O."/>
            <person name="Alonso J."/>
            <person name="Altafi H."/>
            <person name="Araujo R."/>
            <person name="Bowman C.L."/>
            <person name="Brooks S.Y."/>
            <person name="Buehler E."/>
            <person name="Chan A."/>
            <person name="Chao Q."/>
            <person name="Chen H."/>
            <person name="Cheuk R.F."/>
            <person name="Chin C.W."/>
            <person name="Chung M.K."/>
            <person name="Conn L."/>
            <person name="Conway A.B."/>
            <person name="Conway A.R."/>
            <person name="Creasy T.H."/>
            <person name="Dewar K."/>
            <person name="Dunn P."/>
            <person name="Etgu P."/>
            <person name="Feldblyum T.V."/>
            <person name="Feng J.-D."/>
            <person name="Fong B."/>
            <person name="Fujii C.Y."/>
            <person name="Gill J.E."/>
            <person name="Goldsmith A.D."/>
            <person name="Haas B."/>
            <person name="Hansen N.F."/>
            <person name="Hughes B."/>
            <person name="Huizar L."/>
            <person name="Hunter J.L."/>
            <person name="Jenkins J."/>
            <person name="Johnson-Hopson C."/>
            <person name="Khan S."/>
            <person name="Khaykin E."/>
            <person name="Kim C.J."/>
            <person name="Koo H.L."/>
            <person name="Kremenetskaia I."/>
            <person name="Kurtz D.B."/>
            <person name="Kwan A."/>
            <person name="Lam B."/>
            <person name="Langin-Hooper S."/>
            <person name="Lee A."/>
            <person name="Lee J.M."/>
            <person name="Lenz C.A."/>
            <person name="Li J.H."/>
            <person name="Li Y.-P."/>
            <person name="Lin X."/>
            <person name="Liu S.X."/>
            <person name="Liu Z.A."/>
            <person name="Luros J.S."/>
            <person name="Maiti R."/>
            <person name="Marziali A."/>
            <person name="Militscher J."/>
            <person name="Miranda M."/>
            <person name="Nguyen M."/>
            <person name="Nierman W.C."/>
            <person name="Osborne B.I."/>
            <person name="Pai G."/>
            <person name="Peterson J."/>
            <person name="Pham P.K."/>
            <person name="Rizzo M."/>
            <person name="Rooney T."/>
            <person name="Rowley D."/>
            <person name="Sakano H."/>
            <person name="Salzberg S.L."/>
            <person name="Schwartz J.R."/>
            <person name="Shinn P."/>
            <person name="Southwick A.M."/>
            <person name="Sun H."/>
            <person name="Tallon L.J."/>
            <person name="Tambunga G."/>
            <person name="Toriumi M.J."/>
            <person name="Town C.D."/>
            <person name="Utterback T."/>
            <person name="Van Aken S."/>
            <person name="Vaysberg M."/>
            <person name="Vysotskaia V.S."/>
            <person name="Walker M."/>
            <person name="Wu D."/>
            <person name="Yu G."/>
            <person name="Fraser C.M."/>
            <person name="Venter J.C."/>
            <person name="Davis R.W."/>
        </authorList>
    </citation>
    <scope>NUCLEOTIDE SEQUENCE [LARGE SCALE GENOMIC DNA]</scope>
    <source>
        <strain>cv. Columbia</strain>
    </source>
</reference>
<reference key="2">
    <citation type="journal article" date="2017" name="Plant J.">
        <title>Araport11: a complete reannotation of the Arabidopsis thaliana reference genome.</title>
        <authorList>
            <person name="Cheng C.Y."/>
            <person name="Krishnakumar V."/>
            <person name="Chan A.P."/>
            <person name="Thibaud-Nissen F."/>
            <person name="Schobel S."/>
            <person name="Town C.D."/>
        </authorList>
    </citation>
    <scope>GENOME REANNOTATION</scope>
    <source>
        <strain>cv. Columbia</strain>
    </source>
</reference>
<reference key="3">
    <citation type="journal article" date="2001" name="Plant Physiol.">
        <title>A large family of genes that share homology with CLAVATA3.</title>
        <authorList>
            <person name="Cock J.M."/>
            <person name="McCormick S."/>
        </authorList>
    </citation>
    <scope>GENE FAMILY</scope>
    <scope>NOMENCLATURE</scope>
</reference>
<reference key="4">
    <citation type="journal article" date="2003" name="Plant Mol. Biol.">
        <title>The Arabidopsis CLV3-like (CLE) genes are expressed in diverse tissues and encode secreted proteins.</title>
        <authorList>
            <person name="Sharma V.K."/>
            <person name="Ramirez J."/>
            <person name="Fletcher J.C."/>
        </authorList>
    </citation>
    <scope>TISSUE SPECIFICITY</scope>
</reference>
<reference key="5">
    <citation type="journal article" date="2006" name="Plant Physiol.">
        <title>Gain-of-function phenotypes of many CLAVATA3/ESR genes, including four new family members, correlate with tandem variations in the conserved CLAVATA3/ESR domain.</title>
        <authorList>
            <person name="Strabala T.J."/>
            <person name="O'donnell P.J."/>
            <person name="Smit A.-M."/>
            <person name="Ampomah-Dwamena C."/>
            <person name="Martin E.J."/>
            <person name="Netzler N."/>
            <person name="Nieuwenhuizen N.J."/>
            <person name="Quinn B.D."/>
            <person name="Foote H.C.C."/>
            <person name="Hudson K.R."/>
        </authorList>
    </citation>
    <scope>FUNCTION</scope>
    <scope>GENE FAMILY</scope>
</reference>
<reference key="6">
    <citation type="journal article" date="2006" name="Science">
        <title>Dodeca-CLE peptides as suppressors of plant stem cell differentiation.</title>
        <authorList>
            <person name="Ito Y."/>
            <person name="Nakanomyo I."/>
            <person name="Motose H."/>
            <person name="Iwamoto K."/>
            <person name="Sawa S."/>
            <person name="Dohmae N."/>
            <person name="Fukuda H."/>
        </authorList>
    </citation>
    <scope>FUNCTION</scope>
</reference>
<reference key="7">
    <citation type="journal article" date="2008" name="Cell. Mol. Life Sci.">
        <title>The CLE family of plant polypeptide signaling molecules.</title>
        <authorList>
            <person name="Jun J.H."/>
            <person name="Fiume E."/>
            <person name="Fletcher J.C."/>
        </authorList>
    </citation>
    <scope>REVIEW</scope>
</reference>
<reference key="8">
    <citation type="journal article" date="2008" name="Curr. Opin. Plant Biol.">
        <title>Diverse and conserved roles of CLE peptides.</title>
        <authorList>
            <person name="Mitchum M.G."/>
            <person name="Wang X."/>
            <person name="Davis E.L."/>
        </authorList>
    </citation>
    <scope>REVIEW</scope>
</reference>
<reference key="9">
    <citation type="journal article" date="2010" name="Protoplasma">
        <title>CLE peptide signaling during plant development.</title>
        <authorList>
            <person name="Wang G."/>
            <person name="Fiers M."/>
        </authorList>
    </citation>
    <scope>REVIEW</scope>
</reference>
<reference key="10">
    <citation type="journal article" date="2012" name="Proc. Natl. Acad. Sci. U.S.A.">
        <title>CLE-like (CLEL) peptides control the pattern of root growth and lateral root development in Arabidopsis.</title>
        <authorList>
            <person name="Meng L."/>
            <person name="Buchanan B.B."/>
            <person name="Feldman L.J."/>
            <person name="Luan S."/>
        </authorList>
    </citation>
    <scope>FUNCTION</scope>
    <scope>GENE FAMILY</scope>
    <source>
        <strain>cv. Columbia</strain>
    </source>
</reference>
<reference key="11">
    <citation type="journal article" date="2017" name="EMBO Rep.">
        <title>Perception of root-active CLE peptides requires CORYNE function in the phloem vasculature.</title>
        <authorList>
            <person name="Hazak O."/>
            <person name="Brandt B."/>
            <person name="Cattaneo P."/>
            <person name="Santiago J."/>
            <person name="Rodriguez-Villalon A."/>
            <person name="Hothorn M."/>
            <person name="Hardtke C.S."/>
        </authorList>
    </citation>
    <scope>FUNCTION</scope>
    <source>
        <strain>cv. Columbia</strain>
    </source>
</reference>